<organismHost>
    <name type="scientific">Homo sapiens</name>
    <name type="common">Human</name>
    <dbReference type="NCBI Taxonomy" id="9606"/>
</organismHost>
<protein>
    <recommendedName>
        <fullName>DNA-directed RNA polymerase 7 kDa subunit</fullName>
        <ecNumber>2.7.7.6</ecNumber>
    </recommendedName>
</protein>
<proteinExistence type="evidence at transcript level"/>
<gene>
    <name type="primary">OPG090</name>
    <name type="synonym">RPO7</name>
    <name type="ORF">TG6R</name>
</gene>
<comment type="function">
    <text evidence="1">Part of the DNA-dependent RNA polymerase which catalyzes the transcription of viral DNA into RNA using the four ribonucleoside triphosphates as substrates. Responsible for the transcription of early, intermediate and late genes. DNA-dependent RNA polymerase associates with the early transcription factor (ETF), itself composed of OPG118 and OPG134, thereby allowing the early genes transcription. Late transcription, and probably also intermediate transcription, require newly synthesized RNA polymerase.</text>
</comment>
<comment type="catalytic activity">
    <reaction>
        <text>RNA(n) + a ribonucleoside 5'-triphosphate = RNA(n+1) + diphosphate</text>
        <dbReference type="Rhea" id="RHEA:21248"/>
        <dbReference type="Rhea" id="RHEA-COMP:14527"/>
        <dbReference type="Rhea" id="RHEA-COMP:17342"/>
        <dbReference type="ChEBI" id="CHEBI:33019"/>
        <dbReference type="ChEBI" id="CHEBI:61557"/>
        <dbReference type="ChEBI" id="CHEBI:140395"/>
        <dbReference type="EC" id="2.7.7.6"/>
    </reaction>
</comment>
<comment type="subunit">
    <text evidence="1">The DNA-dependent RNA polymerase (vRNAP) consists of eight subunits encoded by early viral genes and termed according to their apparent molecular masses Rpo147, Rpo132, Rpo35, Rpo30, Rpo22, Rpo19, Rpo18, and Rpo7. The same holoenzyme, with the addition of the transcription-specificity factor RAP94, is used for early gene expression.</text>
</comment>
<comment type="subcellular location">
    <subcellularLocation>
        <location evidence="1">Virion</location>
    </subcellularLocation>
    <text evidence="1">All the enzymes and other proteins required to synthesize early mRNAs are packaged within the virion core along with the DNA genome. This is necessary because viral early mRNAs are synthesized within minutes after virus entry into the cell and are extruded through pores in the core particle.</text>
</comment>
<comment type="induction">
    <text>Expressed in the early phase of the viral replicative cycle.</text>
</comment>
<comment type="similarity">
    <text evidence="2">Belongs to the poxviridae DNA-directed RNA polymerase 7 kDa subunit family.</text>
</comment>
<feature type="chain" id="PRO_0000099157" description="DNA-directed RNA polymerase 7 kDa subunit">
    <location>
        <begin position="1"/>
        <end position="63"/>
    </location>
</feature>
<evidence type="ECO:0000250" key="1">
    <source>
        <dbReference type="UniProtKB" id="P68317"/>
    </source>
</evidence>
<evidence type="ECO:0000305" key="2"/>
<name>RP07_VACCT</name>
<dbReference type="EC" id="2.7.7.6"/>
<dbReference type="EMBL" id="AF095689">
    <property type="protein sequence ID" value="AAF33943.1"/>
    <property type="molecule type" value="Genomic_DNA"/>
</dbReference>
<dbReference type="SMR" id="P68316"/>
<dbReference type="Proteomes" id="UP000163220">
    <property type="component" value="Genome"/>
</dbReference>
<dbReference type="GO" id="GO:0000428">
    <property type="term" value="C:DNA-directed RNA polymerase complex"/>
    <property type="evidence" value="ECO:0007669"/>
    <property type="project" value="UniProtKB-KW"/>
</dbReference>
<dbReference type="GO" id="GO:0044423">
    <property type="term" value="C:virion component"/>
    <property type="evidence" value="ECO:0007669"/>
    <property type="project" value="UniProtKB-KW"/>
</dbReference>
<dbReference type="GO" id="GO:0003677">
    <property type="term" value="F:DNA binding"/>
    <property type="evidence" value="ECO:0007669"/>
    <property type="project" value="InterPro"/>
</dbReference>
<dbReference type="GO" id="GO:0003899">
    <property type="term" value="F:DNA-directed RNA polymerase activity"/>
    <property type="evidence" value="ECO:0007669"/>
    <property type="project" value="UniProtKB-EC"/>
</dbReference>
<dbReference type="GO" id="GO:0006351">
    <property type="term" value="P:DNA-templated transcription"/>
    <property type="evidence" value="ECO:0007669"/>
    <property type="project" value="InterPro"/>
</dbReference>
<dbReference type="InterPro" id="IPR008448">
    <property type="entry name" value="RNA_pol_7kDa_chordopoxvir"/>
</dbReference>
<dbReference type="Pfam" id="PF05864">
    <property type="entry name" value="Chordopox_RPO7"/>
    <property type="match status" value="1"/>
</dbReference>
<organism>
    <name type="scientific">Vaccinia virus (strain Tian Tan)</name>
    <name type="common">VACV</name>
    <dbReference type="NCBI Taxonomy" id="10253"/>
    <lineage>
        <taxon>Viruses</taxon>
        <taxon>Varidnaviria</taxon>
        <taxon>Bamfordvirae</taxon>
        <taxon>Nucleocytoviricota</taxon>
        <taxon>Pokkesviricetes</taxon>
        <taxon>Chitovirales</taxon>
        <taxon>Poxviridae</taxon>
        <taxon>Chordopoxvirinae</taxon>
        <taxon>Orthopoxvirus</taxon>
        <taxon>Vaccinia virus</taxon>
    </lineage>
</organism>
<sequence>MVFQLVCSTCGKDISHERYKLIIRKKSLKDVLVSVKNECCRLKLSTQIEPQRNLTVQPLLDIN</sequence>
<reference key="1">
    <citation type="submission" date="1998-09" db="EMBL/GenBank/DDBJ databases">
        <title>Complete genomic sequence of vaccinia virus (Tian Tan strain).</title>
        <authorList>
            <person name="Jin Q."/>
            <person name="Hou Y.D."/>
            <person name="Cheng N.H."/>
            <person name="Yao E.M."/>
            <person name="Cheng S.X."/>
            <person name="Yang X.K."/>
            <person name="Jing D.Y."/>
            <person name="Yu W.H."/>
            <person name="Yuan J.S."/>
            <person name="Ma X.J."/>
        </authorList>
    </citation>
    <scope>NUCLEOTIDE SEQUENCE [LARGE SCALE GENOMIC DNA]</scope>
</reference>
<reference key="2">
    <citation type="journal article" date="2003" name="J. Gen. Virol.">
        <title>Vaccinia virus transcription.</title>
        <authorList>
            <person name="Broyles S.S."/>
        </authorList>
    </citation>
    <scope>REVIEW</scope>
</reference>
<accession>P68316</accession>
<accession>Q89560</accession>
<keyword id="KW-0240">DNA-directed RNA polymerase</keyword>
<keyword id="KW-0244">Early protein</keyword>
<keyword id="KW-0548">Nucleotidyltransferase</keyword>
<keyword id="KW-0804">Transcription</keyword>
<keyword id="KW-0808">Transferase</keyword>
<keyword id="KW-0946">Virion</keyword>